<sequence>MRMADHFEETTMGTFLADYYLWTKSLHVISVLAWMAGLFYLPRLFVYHAEVVKAGTETDALFQTMERRLLRAIMNPAMIATWIFGLLLVFTPGIVDWSMLWPWTKAACVLAMTGFHMWLAARRRDFAAGANRHKGRTYRMMNELPTLLMLVIVFSAVAKWNYWGF</sequence>
<protein>
    <recommendedName>
        <fullName evidence="1">Protoporphyrinogen IX oxidase</fullName>
        <shortName evidence="1">PPO</shortName>
        <ecNumber evidence="1">1.3.99.-</ecNumber>
    </recommendedName>
    <alternativeName>
        <fullName>ORF1</fullName>
    </alternativeName>
</protein>
<name>HEMJ_CERS4</name>
<dbReference type="EC" id="1.3.99.-" evidence="1"/>
<dbReference type="EMBL" id="L76097">
    <property type="protein sequence ID" value="AAB02031.1"/>
    <property type="molecule type" value="Genomic_DNA"/>
</dbReference>
<dbReference type="EMBL" id="L76097">
    <property type="protein sequence ID" value="AAB02032.1"/>
    <property type="status" value="ALT_INIT"/>
    <property type="molecule type" value="Genomic_DNA"/>
</dbReference>
<dbReference type="EMBL" id="L76097">
    <property type="protein sequence ID" value="AAB02033.1"/>
    <property type="status" value="ALT_INIT"/>
    <property type="molecule type" value="Genomic_DNA"/>
</dbReference>
<dbReference type="EMBL" id="CP000143">
    <property type="protein sequence ID" value="ABA80413.1"/>
    <property type="molecule type" value="Genomic_DNA"/>
</dbReference>
<dbReference type="PIR" id="JC6036">
    <property type="entry name" value="JC6036"/>
</dbReference>
<dbReference type="RefSeq" id="WP_011338807.1">
    <property type="nucleotide sequence ID" value="NC_007493.2"/>
</dbReference>
<dbReference type="RefSeq" id="YP_354314.2">
    <property type="nucleotide sequence ID" value="NC_007493.2"/>
</dbReference>
<dbReference type="STRING" id="272943.RSP_1232"/>
<dbReference type="EnsemblBacteria" id="ABA80413">
    <property type="protein sequence ID" value="ABA80413"/>
    <property type="gene ID" value="RSP_1232"/>
</dbReference>
<dbReference type="GeneID" id="3719680"/>
<dbReference type="KEGG" id="rsp:RSP_1232"/>
<dbReference type="PATRIC" id="fig|272943.9.peg.3213"/>
<dbReference type="eggNOG" id="COG1981">
    <property type="taxonomic scope" value="Bacteria"/>
</dbReference>
<dbReference type="OrthoDB" id="9800824at2"/>
<dbReference type="PhylomeDB" id="Q53229"/>
<dbReference type="UniPathway" id="UPA00251">
    <property type="reaction ID" value="UER00324"/>
</dbReference>
<dbReference type="Proteomes" id="UP000002703">
    <property type="component" value="Chromosome 1"/>
</dbReference>
<dbReference type="GO" id="GO:0005886">
    <property type="term" value="C:plasma membrane"/>
    <property type="evidence" value="ECO:0007669"/>
    <property type="project" value="UniProtKB-SubCell"/>
</dbReference>
<dbReference type="GO" id="GO:0046872">
    <property type="term" value="F:metal ion binding"/>
    <property type="evidence" value="ECO:0007669"/>
    <property type="project" value="UniProtKB-KW"/>
</dbReference>
<dbReference type="GO" id="GO:0070818">
    <property type="term" value="F:protoporphyrinogen oxidase activity"/>
    <property type="evidence" value="ECO:0007669"/>
    <property type="project" value="UniProtKB-UniRule"/>
</dbReference>
<dbReference type="GO" id="GO:0006782">
    <property type="term" value="P:protoporphyrinogen IX biosynthetic process"/>
    <property type="evidence" value="ECO:0007669"/>
    <property type="project" value="UniProtKB-UniRule"/>
</dbReference>
<dbReference type="HAMAP" id="MF_02239">
    <property type="entry name" value="HemJ"/>
    <property type="match status" value="1"/>
</dbReference>
<dbReference type="InterPro" id="IPR005265">
    <property type="entry name" value="HemJ-like"/>
</dbReference>
<dbReference type="NCBIfam" id="TIGR00701">
    <property type="entry name" value="protoporphyrinogen oxidase HemJ"/>
    <property type="match status" value="1"/>
</dbReference>
<dbReference type="PANTHER" id="PTHR40255:SF1">
    <property type="entry name" value="PROTOPORPHYRINOGEN IX OXIDASE"/>
    <property type="match status" value="1"/>
</dbReference>
<dbReference type="PANTHER" id="PTHR40255">
    <property type="entry name" value="UPF0093 MEMBRANE PROTEIN SLR1790"/>
    <property type="match status" value="1"/>
</dbReference>
<dbReference type="Pfam" id="PF03653">
    <property type="entry name" value="UPF0093"/>
    <property type="match status" value="1"/>
</dbReference>
<dbReference type="PIRSF" id="PIRSF004638">
    <property type="entry name" value="UCP004638"/>
    <property type="match status" value="1"/>
</dbReference>
<proteinExistence type="inferred from homology"/>
<organism>
    <name type="scientific">Cereibacter sphaeroides (strain ATCC 17023 / DSM 158 / JCM 6121 / CCUG 31486 / LMG 2827 / NBRC 12203 / NCIMB 8253 / ATH 2.4.1.)</name>
    <name type="common">Rhodobacter sphaeroides</name>
    <dbReference type="NCBI Taxonomy" id="272943"/>
    <lineage>
        <taxon>Bacteria</taxon>
        <taxon>Pseudomonadati</taxon>
        <taxon>Pseudomonadota</taxon>
        <taxon>Alphaproteobacteria</taxon>
        <taxon>Rhodobacterales</taxon>
        <taxon>Paracoccaceae</taxon>
        <taxon>Cereibacter</taxon>
    </lineage>
</organism>
<reference key="1">
    <citation type="journal article" date="1996" name="J. Bacteriol.">
        <title>The Rhodobacter sphaeroides 2.4.1 rho gene: expression and genetic analysis of structure and function.</title>
        <authorList>
            <person name="Gomelsky M."/>
            <person name="Kaplan S."/>
        </authorList>
    </citation>
    <scope>NUCLEOTIDE SEQUENCE [GENOMIC DNA]</scope>
</reference>
<reference key="2">
    <citation type="submission" date="2005-09" db="EMBL/GenBank/DDBJ databases">
        <title>Complete sequence of chromosome 1 of Rhodobacter sphaeroides 2.4.1.</title>
        <authorList>
            <person name="Copeland A."/>
            <person name="Lucas S."/>
            <person name="Lapidus A."/>
            <person name="Barry K."/>
            <person name="Detter J.C."/>
            <person name="Glavina T."/>
            <person name="Hammon N."/>
            <person name="Israni S."/>
            <person name="Pitluck S."/>
            <person name="Richardson P."/>
            <person name="Mackenzie C."/>
            <person name="Choudhary M."/>
            <person name="Larimer F."/>
            <person name="Hauser L.J."/>
            <person name="Land M."/>
            <person name="Donohue T.J."/>
            <person name="Kaplan S."/>
        </authorList>
    </citation>
    <scope>NUCLEOTIDE SEQUENCE [LARGE SCALE GENOMIC DNA]</scope>
    <source>
        <strain>ATCC 17023 / DSM 158 / JCM 6121 / CCUG 31486 / LMG 2827 / NBRC 12203 / NCIMB 8253 / ATH 2.4.1.</strain>
    </source>
</reference>
<gene>
    <name type="ordered locus">RHOS4_28450</name>
    <name type="ORF">RSP_1232</name>
</gene>
<keyword id="KW-1003">Cell membrane</keyword>
<keyword id="KW-0349">Heme</keyword>
<keyword id="KW-0408">Iron</keyword>
<keyword id="KW-0472">Membrane</keyword>
<keyword id="KW-0479">Metal-binding</keyword>
<keyword id="KW-0560">Oxidoreductase</keyword>
<keyword id="KW-1185">Reference proteome</keyword>
<keyword id="KW-0812">Transmembrane</keyword>
<keyword id="KW-1133">Transmembrane helix</keyword>
<accession>Q53229</accession>
<accession>Q3IYH1</accession>
<accession>Q53230</accession>
<accession>Q53231</accession>
<comment type="function">
    <text evidence="1">Catalyzes the oxidation of protoporphyrinogen IX to protoporphyrin IX. Is involved in the biosynthesis of tetrapyrrole molecules like heme and chlorophyll. Does not use oxygen or artificial electron acceptors such as menadione or benzoquinone.</text>
</comment>
<comment type="catalytic activity">
    <reaction evidence="1">
        <text>protoporphyrinogen IX + 3 A = protoporphyrin IX + 3 AH2</text>
        <dbReference type="Rhea" id="RHEA:62000"/>
        <dbReference type="ChEBI" id="CHEBI:13193"/>
        <dbReference type="ChEBI" id="CHEBI:17499"/>
        <dbReference type="ChEBI" id="CHEBI:57306"/>
        <dbReference type="ChEBI" id="CHEBI:57307"/>
    </reaction>
</comment>
<comment type="cofactor">
    <cofactor evidence="1">
        <name>heme b</name>
        <dbReference type="ChEBI" id="CHEBI:60344"/>
    </cofactor>
    <text evidence="1">Binds 1 heme b (iron(II)-protoporphyrin IX) group per subunit.</text>
</comment>
<comment type="pathway">
    <text evidence="1">Porphyrin-containing compound metabolism; protoporphyrin-IX biosynthesis; protoporphyrin-IX from protoporphyrinogen-IX: step 1/1.</text>
</comment>
<comment type="subunit">
    <text evidence="1">Homodimer.</text>
</comment>
<comment type="subcellular location">
    <subcellularLocation>
        <location evidence="1">Cell membrane</location>
        <topology evidence="2">Multi-pass membrane protein</topology>
    </subcellularLocation>
</comment>
<comment type="similarity">
    <text evidence="3 4">Belongs to the HemJ family.</text>
</comment>
<comment type="caution">
    <text evidence="4">It is uncertain whether Met-1, Met-3 or Met-12 is the initiator.</text>
</comment>
<comment type="sequence caution" evidence="4">
    <conflict type="erroneous initiation">
        <sequence resource="EMBL-CDS" id="AAB02032"/>
    </conflict>
</comment>
<comment type="sequence caution" evidence="4">
    <conflict type="erroneous initiation">
        <sequence resource="EMBL-CDS" id="AAB02033"/>
    </conflict>
</comment>
<feature type="chain" id="PRO_0000217660" description="Protoporphyrinogen IX oxidase">
    <location>
        <begin position="1"/>
        <end position="165"/>
    </location>
</feature>
<feature type="transmembrane region" description="Helical" evidence="2">
    <location>
        <begin position="26"/>
        <end position="46"/>
    </location>
</feature>
<feature type="transmembrane region" description="Helical" evidence="2">
    <location>
        <begin position="77"/>
        <end position="97"/>
    </location>
</feature>
<feature type="transmembrane region" description="Helical" evidence="2">
    <location>
        <begin position="99"/>
        <end position="119"/>
    </location>
</feature>
<feature type="transmembrane region" description="Helical" evidence="2">
    <location>
        <begin position="145"/>
        <end position="165"/>
    </location>
</feature>
<feature type="binding site" description="axial binding residue" evidence="1">
    <location>
        <position position="27"/>
    </location>
    <ligand>
        <name>heme</name>
        <dbReference type="ChEBI" id="CHEBI:30413"/>
    </ligand>
    <ligandPart>
        <name>Fe</name>
        <dbReference type="ChEBI" id="CHEBI:18248"/>
    </ligandPart>
</feature>
<feature type="binding site" description="axial binding residue" evidence="1">
    <location>
        <position position="105"/>
    </location>
    <ligand>
        <name>heme</name>
        <dbReference type="ChEBI" id="CHEBI:30413"/>
    </ligand>
    <ligandPart>
        <name>Fe</name>
        <dbReference type="ChEBI" id="CHEBI:18248"/>
    </ligandPart>
</feature>
<evidence type="ECO:0000250" key="1">
    <source>
        <dbReference type="UniProtKB" id="P72793"/>
    </source>
</evidence>
<evidence type="ECO:0000255" key="2"/>
<evidence type="ECO:0000255" key="3">
    <source>
        <dbReference type="HAMAP-Rule" id="MF_02239"/>
    </source>
</evidence>
<evidence type="ECO:0000305" key="4"/>